<organism>
    <name type="scientific">Paracidovorax citrulli (strain AAC00-1)</name>
    <name type="common">Acidovorax citrulli</name>
    <dbReference type="NCBI Taxonomy" id="397945"/>
    <lineage>
        <taxon>Bacteria</taxon>
        <taxon>Pseudomonadati</taxon>
        <taxon>Pseudomonadota</taxon>
        <taxon>Betaproteobacteria</taxon>
        <taxon>Burkholderiales</taxon>
        <taxon>Comamonadaceae</taxon>
        <taxon>Paracidovorax</taxon>
    </lineage>
</organism>
<proteinExistence type="inferred from homology"/>
<name>RRF_PARC0</name>
<evidence type="ECO:0000255" key="1">
    <source>
        <dbReference type="HAMAP-Rule" id="MF_00040"/>
    </source>
</evidence>
<accession>A1TN72</accession>
<dbReference type="EMBL" id="CP000512">
    <property type="protein sequence ID" value="ABM32410.1"/>
    <property type="molecule type" value="Genomic_DNA"/>
</dbReference>
<dbReference type="RefSeq" id="WP_011794956.1">
    <property type="nucleotide sequence ID" value="NC_008752.1"/>
</dbReference>
<dbReference type="SMR" id="A1TN72"/>
<dbReference type="STRING" id="397945.Aave_1826"/>
<dbReference type="GeneID" id="79793165"/>
<dbReference type="KEGG" id="aav:Aave_1826"/>
<dbReference type="eggNOG" id="COG0233">
    <property type="taxonomic scope" value="Bacteria"/>
</dbReference>
<dbReference type="HOGENOM" id="CLU_073981_2_0_4"/>
<dbReference type="OrthoDB" id="9804006at2"/>
<dbReference type="Proteomes" id="UP000002596">
    <property type="component" value="Chromosome"/>
</dbReference>
<dbReference type="GO" id="GO:0005829">
    <property type="term" value="C:cytosol"/>
    <property type="evidence" value="ECO:0007669"/>
    <property type="project" value="GOC"/>
</dbReference>
<dbReference type="GO" id="GO:0043023">
    <property type="term" value="F:ribosomal large subunit binding"/>
    <property type="evidence" value="ECO:0007669"/>
    <property type="project" value="TreeGrafter"/>
</dbReference>
<dbReference type="GO" id="GO:0002184">
    <property type="term" value="P:cytoplasmic translational termination"/>
    <property type="evidence" value="ECO:0007669"/>
    <property type="project" value="TreeGrafter"/>
</dbReference>
<dbReference type="CDD" id="cd00520">
    <property type="entry name" value="RRF"/>
    <property type="match status" value="1"/>
</dbReference>
<dbReference type="FunFam" id="1.10.132.20:FF:000001">
    <property type="entry name" value="Ribosome-recycling factor"/>
    <property type="match status" value="1"/>
</dbReference>
<dbReference type="FunFam" id="3.30.1360.40:FF:000001">
    <property type="entry name" value="Ribosome-recycling factor"/>
    <property type="match status" value="1"/>
</dbReference>
<dbReference type="Gene3D" id="3.30.1360.40">
    <property type="match status" value="1"/>
</dbReference>
<dbReference type="Gene3D" id="1.10.132.20">
    <property type="entry name" value="Ribosome-recycling factor"/>
    <property type="match status" value="1"/>
</dbReference>
<dbReference type="HAMAP" id="MF_00040">
    <property type="entry name" value="RRF"/>
    <property type="match status" value="1"/>
</dbReference>
<dbReference type="InterPro" id="IPR002661">
    <property type="entry name" value="Ribosome_recyc_fac"/>
</dbReference>
<dbReference type="InterPro" id="IPR023584">
    <property type="entry name" value="Ribosome_recyc_fac_dom"/>
</dbReference>
<dbReference type="InterPro" id="IPR036191">
    <property type="entry name" value="RRF_sf"/>
</dbReference>
<dbReference type="NCBIfam" id="TIGR00496">
    <property type="entry name" value="frr"/>
    <property type="match status" value="1"/>
</dbReference>
<dbReference type="PANTHER" id="PTHR20982:SF3">
    <property type="entry name" value="MITOCHONDRIAL RIBOSOME RECYCLING FACTOR PSEUDO 1"/>
    <property type="match status" value="1"/>
</dbReference>
<dbReference type="PANTHER" id="PTHR20982">
    <property type="entry name" value="RIBOSOME RECYCLING FACTOR"/>
    <property type="match status" value="1"/>
</dbReference>
<dbReference type="Pfam" id="PF01765">
    <property type="entry name" value="RRF"/>
    <property type="match status" value="1"/>
</dbReference>
<dbReference type="SUPFAM" id="SSF55194">
    <property type="entry name" value="Ribosome recycling factor, RRF"/>
    <property type="match status" value="1"/>
</dbReference>
<comment type="function">
    <text evidence="1">Responsible for the release of ribosomes from messenger RNA at the termination of protein biosynthesis. May increase the efficiency of translation by recycling ribosomes from one round of translation to another.</text>
</comment>
<comment type="subcellular location">
    <subcellularLocation>
        <location evidence="1">Cytoplasm</location>
    </subcellularLocation>
</comment>
<comment type="similarity">
    <text evidence="1">Belongs to the RRF family.</text>
</comment>
<reference key="1">
    <citation type="submission" date="2006-12" db="EMBL/GenBank/DDBJ databases">
        <title>Complete sequence of Acidovorax avenae subsp. citrulli AAC00-1.</title>
        <authorList>
            <person name="Copeland A."/>
            <person name="Lucas S."/>
            <person name="Lapidus A."/>
            <person name="Barry K."/>
            <person name="Detter J.C."/>
            <person name="Glavina del Rio T."/>
            <person name="Dalin E."/>
            <person name="Tice H."/>
            <person name="Pitluck S."/>
            <person name="Kiss H."/>
            <person name="Brettin T."/>
            <person name="Bruce D."/>
            <person name="Han C."/>
            <person name="Tapia R."/>
            <person name="Gilna P."/>
            <person name="Schmutz J."/>
            <person name="Larimer F."/>
            <person name="Land M."/>
            <person name="Hauser L."/>
            <person name="Kyrpides N."/>
            <person name="Kim E."/>
            <person name="Stahl D."/>
            <person name="Richardson P."/>
        </authorList>
    </citation>
    <scope>NUCLEOTIDE SEQUENCE [LARGE SCALE GENOMIC DNA]</scope>
    <source>
        <strain>AAC00-1</strain>
    </source>
</reference>
<feature type="chain" id="PRO_1000003094" description="Ribosome-recycling factor">
    <location>
        <begin position="1"/>
        <end position="186"/>
    </location>
</feature>
<keyword id="KW-0963">Cytoplasm</keyword>
<keyword id="KW-0648">Protein biosynthesis</keyword>
<protein>
    <recommendedName>
        <fullName evidence="1">Ribosome-recycling factor</fullName>
        <shortName evidence="1">RRF</shortName>
    </recommendedName>
    <alternativeName>
        <fullName evidence="1">Ribosome-releasing factor</fullName>
    </alternativeName>
</protein>
<sequence length="186" mass="20570">MTIADIKKNTEAKMDQSIVAFKNNLAKIRTGRANPALLDSVQVEYYGSMVPLSQVANVSLIDARTISVQPWEKGMGAKIEKAIRESELGLNPASMGDLIRVPMPPMSEERRKEMTKLARNEGEGAKVAVRNLRRDANESVKKLVKDKLASEDEQKRAEADIQKVTDKHIAEVDALVAAKEQEIMAV</sequence>
<gene>
    <name evidence="1" type="primary">frr</name>
    <name type="ordered locus">Aave_1826</name>
</gene>